<organism>
    <name type="scientific">Verminephrobacter eiseniae (strain EF01-2)</name>
    <dbReference type="NCBI Taxonomy" id="391735"/>
    <lineage>
        <taxon>Bacteria</taxon>
        <taxon>Pseudomonadati</taxon>
        <taxon>Pseudomonadota</taxon>
        <taxon>Betaproteobacteria</taxon>
        <taxon>Burkholderiales</taxon>
        <taxon>Comamonadaceae</taxon>
        <taxon>Verminephrobacter</taxon>
    </lineage>
</organism>
<sequence length="109" mass="12217">MTDLEFMDHAEKLLLAVERSCDRINETTDADLDSQRSGGMLTLVFPNRSQIVINLQKPLHEVWMAARSGGYHYRFDGHAWQDSKGAGEFFACLGRDATVQSGRPLQFAA</sequence>
<accession>A1WDW0</accession>
<feature type="chain" id="PRO_1000010964" description="Iron-sulfur cluster assembly protein CyaY">
    <location>
        <begin position="1"/>
        <end position="109"/>
    </location>
</feature>
<reference key="1">
    <citation type="submission" date="2006-12" db="EMBL/GenBank/DDBJ databases">
        <title>Complete sequence of chromosome 1 of Verminephrobacter eiseniae EF01-2.</title>
        <authorList>
            <person name="Copeland A."/>
            <person name="Lucas S."/>
            <person name="Lapidus A."/>
            <person name="Barry K."/>
            <person name="Detter J.C."/>
            <person name="Glavina del Rio T."/>
            <person name="Dalin E."/>
            <person name="Tice H."/>
            <person name="Pitluck S."/>
            <person name="Chertkov O."/>
            <person name="Brettin T."/>
            <person name="Bruce D."/>
            <person name="Han C."/>
            <person name="Tapia R."/>
            <person name="Gilna P."/>
            <person name="Schmutz J."/>
            <person name="Larimer F."/>
            <person name="Land M."/>
            <person name="Hauser L."/>
            <person name="Kyrpides N."/>
            <person name="Kim E."/>
            <person name="Stahl D."/>
            <person name="Richardson P."/>
        </authorList>
    </citation>
    <scope>NUCLEOTIDE SEQUENCE [LARGE SCALE GENOMIC DNA]</scope>
    <source>
        <strain>EF01-2</strain>
    </source>
</reference>
<name>CYAY_VEREI</name>
<keyword id="KW-0408">Iron</keyword>
<keyword id="KW-0479">Metal-binding</keyword>
<keyword id="KW-1185">Reference proteome</keyword>
<comment type="function">
    <text evidence="1">Involved in iron-sulfur (Fe-S) cluster assembly. May act as a regulator of Fe-S biogenesis.</text>
</comment>
<comment type="similarity">
    <text evidence="1">Belongs to the frataxin family.</text>
</comment>
<gene>
    <name evidence="1" type="primary">cyaY</name>
    <name type="ordered locus">Veis_0024</name>
</gene>
<dbReference type="EMBL" id="CP000542">
    <property type="protein sequence ID" value="ABM55817.1"/>
    <property type="molecule type" value="Genomic_DNA"/>
</dbReference>
<dbReference type="RefSeq" id="WP_011807836.1">
    <property type="nucleotide sequence ID" value="NC_008786.1"/>
</dbReference>
<dbReference type="SMR" id="A1WDW0"/>
<dbReference type="STRING" id="391735.Veis_0024"/>
<dbReference type="GeneID" id="76458782"/>
<dbReference type="KEGG" id="vei:Veis_0024"/>
<dbReference type="eggNOG" id="COG1965">
    <property type="taxonomic scope" value="Bacteria"/>
</dbReference>
<dbReference type="HOGENOM" id="CLU_080880_3_0_4"/>
<dbReference type="OrthoDB" id="285675at2"/>
<dbReference type="Proteomes" id="UP000000374">
    <property type="component" value="Chromosome"/>
</dbReference>
<dbReference type="GO" id="GO:0005737">
    <property type="term" value="C:cytoplasm"/>
    <property type="evidence" value="ECO:0007669"/>
    <property type="project" value="UniProtKB-ARBA"/>
</dbReference>
<dbReference type="GO" id="GO:0008199">
    <property type="term" value="F:ferric iron binding"/>
    <property type="evidence" value="ECO:0007669"/>
    <property type="project" value="InterPro"/>
</dbReference>
<dbReference type="GO" id="GO:0016226">
    <property type="term" value="P:iron-sulfur cluster assembly"/>
    <property type="evidence" value="ECO:0007669"/>
    <property type="project" value="UniProtKB-UniRule"/>
</dbReference>
<dbReference type="Gene3D" id="3.30.920.10">
    <property type="entry name" value="Frataxin/CyaY"/>
    <property type="match status" value="1"/>
</dbReference>
<dbReference type="HAMAP" id="MF_00142">
    <property type="entry name" value="CyaY"/>
    <property type="match status" value="1"/>
</dbReference>
<dbReference type="InterPro" id="IPR047584">
    <property type="entry name" value="CyaY"/>
</dbReference>
<dbReference type="InterPro" id="IPR002908">
    <property type="entry name" value="Frataxin/CyaY"/>
</dbReference>
<dbReference type="InterPro" id="IPR036524">
    <property type="entry name" value="Frataxin/CyaY_sf"/>
</dbReference>
<dbReference type="InterPro" id="IPR020895">
    <property type="entry name" value="Frataxin_CS"/>
</dbReference>
<dbReference type="NCBIfam" id="TIGR03421">
    <property type="entry name" value="FeS_CyaY"/>
    <property type="match status" value="1"/>
</dbReference>
<dbReference type="Pfam" id="PF01491">
    <property type="entry name" value="Frataxin_Cyay"/>
    <property type="match status" value="1"/>
</dbReference>
<dbReference type="SMART" id="SM01219">
    <property type="entry name" value="Frataxin_Cyay"/>
    <property type="match status" value="1"/>
</dbReference>
<dbReference type="SUPFAM" id="SSF55387">
    <property type="entry name" value="Frataxin/Nqo15-like"/>
    <property type="match status" value="1"/>
</dbReference>
<dbReference type="PROSITE" id="PS01344">
    <property type="entry name" value="FRATAXIN_1"/>
    <property type="match status" value="1"/>
</dbReference>
<dbReference type="PROSITE" id="PS50810">
    <property type="entry name" value="FRATAXIN_2"/>
    <property type="match status" value="1"/>
</dbReference>
<evidence type="ECO:0000255" key="1">
    <source>
        <dbReference type="HAMAP-Rule" id="MF_00142"/>
    </source>
</evidence>
<protein>
    <recommendedName>
        <fullName evidence="1">Iron-sulfur cluster assembly protein CyaY</fullName>
    </recommendedName>
</protein>
<proteinExistence type="inferred from homology"/>